<reference key="1">
    <citation type="journal article" date="1994" name="Plant Physiol.">
        <title>Characterization of PRP1 and PRP2 from Medicago truncatula.</title>
        <authorList>
            <person name="Wilson R.C."/>
            <person name="Cooper J.B."/>
        </authorList>
    </citation>
    <scope>NUCLEOTIDE SEQUENCE [MRNA]</scope>
    <source>
        <strain>cv. Jemalong</strain>
        <tissue>Root nodule</tissue>
    </source>
</reference>
<organism>
    <name type="scientific">Medicago truncatula</name>
    <name type="common">Barrel medic</name>
    <name type="synonym">Medicago tribuloides</name>
    <dbReference type="NCBI Taxonomy" id="3880"/>
    <lineage>
        <taxon>Eukaryota</taxon>
        <taxon>Viridiplantae</taxon>
        <taxon>Streptophyta</taxon>
        <taxon>Embryophyta</taxon>
        <taxon>Tracheophyta</taxon>
        <taxon>Spermatophyta</taxon>
        <taxon>Magnoliopsida</taxon>
        <taxon>eudicotyledons</taxon>
        <taxon>Gunneridae</taxon>
        <taxon>Pentapetalae</taxon>
        <taxon>rosids</taxon>
        <taxon>fabids</taxon>
        <taxon>Fabales</taxon>
        <taxon>Fabaceae</taxon>
        <taxon>Papilionoideae</taxon>
        <taxon>50 kb inversion clade</taxon>
        <taxon>NPAAA clade</taxon>
        <taxon>Hologalegina</taxon>
        <taxon>IRL clade</taxon>
        <taxon>Trifolieae</taxon>
        <taxon>Medicago</taxon>
    </lineage>
</organism>
<evidence type="ECO:0000250" key="1"/>
<evidence type="ECO:0000255" key="2"/>
<evidence type="ECO:0000256" key="3">
    <source>
        <dbReference type="SAM" id="MobiDB-lite"/>
    </source>
</evidence>
<evidence type="ECO:0000305" key="4"/>
<name>PRP1_MEDTR</name>
<gene>
    <name type="primary">PRP1</name>
</gene>
<comment type="function">
    <text evidence="1">This is a developmentally regulated putative cell wall protein.</text>
</comment>
<comment type="subcellular location">
    <subcellularLocation>
        <location evidence="4">Secreted</location>
        <location evidence="4">Cell wall</location>
    </subcellularLocation>
</comment>
<comment type="tissue specificity">
    <text>Expressed in hypocotyls, roots and mature root nodules.</text>
</comment>
<comment type="similarity">
    <text evidence="4">Belongs to the plant proline-rich protein superfamily. ENOD12 family.</text>
</comment>
<sequence length="206" mass="23336">MASSNFLVLLLFALFAIPQGLANYEKPPVYQPPVYKPPVEKPPVYKPPVEKPPVYKPPVEKPPVYKPPVYKPPVYKPPVVKPPVYKPPVYKPPVYKPPVYKPPVEKPPVYKPPVYKPPVVKPPVYKPPVYKPPVEKPPVYKPPVVKPPVYKPPVYKPPVVKPPVYKPPVYKPPVYKPPVEKPPVYKPPVYKPPVEKPPVYGPPHHP</sequence>
<keyword id="KW-0134">Cell wall</keyword>
<keyword id="KW-0217">Developmental protein</keyword>
<keyword id="KW-0677">Repeat</keyword>
<keyword id="KW-0964">Secreted</keyword>
<keyword id="KW-0732">Signal</keyword>
<proteinExistence type="evidence at transcript level"/>
<dbReference type="EMBL" id="L25811">
    <property type="protein sequence ID" value="AAA62446.1"/>
    <property type="molecule type" value="mRNA"/>
</dbReference>
<dbReference type="GO" id="GO:0005576">
    <property type="term" value="C:extracellular region"/>
    <property type="evidence" value="ECO:0007669"/>
    <property type="project" value="UniProtKB-KW"/>
</dbReference>
<dbReference type="GO" id="GO:0005199">
    <property type="term" value="F:structural constituent of cell wall"/>
    <property type="evidence" value="ECO:0007669"/>
    <property type="project" value="InterPro"/>
</dbReference>
<dbReference type="InterPro" id="IPR002964">
    <property type="entry name" value="Adhesive_plaq"/>
</dbReference>
<dbReference type="InterPro" id="IPR003883">
    <property type="entry name" value="Extensin-like"/>
</dbReference>
<dbReference type="InterPro" id="IPR051308">
    <property type="entry name" value="Proline-rich_CW_protein"/>
</dbReference>
<dbReference type="PANTHER" id="PTHR34629">
    <property type="entry name" value="PROLINE-RICH EXTENSIN-LIKE PROTEIN EPR1"/>
    <property type="match status" value="1"/>
</dbReference>
<dbReference type="PANTHER" id="PTHR34629:SF4">
    <property type="entry name" value="REPETITIVE PROLINE-RICH CELL WALL PROTEIN 3"/>
    <property type="match status" value="1"/>
</dbReference>
<dbReference type="Pfam" id="PF02095">
    <property type="entry name" value="Extensin_1"/>
    <property type="match status" value="2"/>
</dbReference>
<dbReference type="PRINTS" id="PR01216">
    <property type="entry name" value="ADHESIVEI"/>
</dbReference>
<protein>
    <recommendedName>
        <fullName>Repetitive proline-rich cell wall protein 1</fullName>
    </recommendedName>
</protein>
<feature type="signal peptide" evidence="2">
    <location>
        <begin position="1"/>
        <end position="22"/>
    </location>
</feature>
<feature type="chain" id="PRO_0000019808" description="Repetitive proline-rich cell wall protein 1">
    <location>
        <begin position="23"/>
        <end position="206"/>
    </location>
</feature>
<feature type="repeat" description="1">
    <location>
        <begin position="32"/>
        <end position="36"/>
    </location>
</feature>
<feature type="repeat" description="2">
    <location>
        <begin position="37"/>
        <end position="41"/>
    </location>
</feature>
<feature type="repeat" description="3">
    <location>
        <begin position="42"/>
        <end position="46"/>
    </location>
</feature>
<feature type="repeat" description="4">
    <location>
        <begin position="47"/>
        <end position="51"/>
    </location>
</feature>
<feature type="repeat" description="5">
    <location>
        <begin position="52"/>
        <end position="56"/>
    </location>
</feature>
<feature type="repeat" description="6">
    <location>
        <begin position="57"/>
        <end position="61"/>
    </location>
</feature>
<feature type="repeat" description="7">
    <location>
        <begin position="62"/>
        <end position="66"/>
    </location>
</feature>
<feature type="repeat" description="8">
    <location>
        <begin position="67"/>
        <end position="71"/>
    </location>
</feature>
<feature type="repeat" description="9">
    <location>
        <begin position="72"/>
        <end position="76"/>
    </location>
</feature>
<feature type="repeat" description="10">
    <location>
        <begin position="77"/>
        <end position="81"/>
    </location>
</feature>
<feature type="repeat" description="11">
    <location>
        <begin position="82"/>
        <end position="86"/>
    </location>
</feature>
<feature type="repeat" description="12">
    <location>
        <begin position="87"/>
        <end position="91"/>
    </location>
</feature>
<feature type="repeat" description="13">
    <location>
        <begin position="92"/>
        <end position="96"/>
    </location>
</feature>
<feature type="repeat" description="14">
    <location>
        <begin position="97"/>
        <end position="101"/>
    </location>
</feature>
<feature type="repeat" description="15">
    <location>
        <begin position="102"/>
        <end position="106"/>
    </location>
</feature>
<feature type="repeat" description="16">
    <location>
        <begin position="107"/>
        <end position="111"/>
    </location>
</feature>
<feature type="repeat" description="17">
    <location>
        <begin position="112"/>
        <end position="116"/>
    </location>
</feature>
<feature type="repeat" description="18">
    <location>
        <begin position="117"/>
        <end position="121"/>
    </location>
</feature>
<feature type="repeat" description="19">
    <location>
        <begin position="122"/>
        <end position="126"/>
    </location>
</feature>
<feature type="repeat" description="20">
    <location>
        <begin position="127"/>
        <end position="131"/>
    </location>
</feature>
<feature type="repeat" description="21">
    <location>
        <begin position="132"/>
        <end position="136"/>
    </location>
</feature>
<feature type="repeat" description="22">
    <location>
        <begin position="137"/>
        <end position="141"/>
    </location>
</feature>
<feature type="repeat" description="23">
    <location>
        <begin position="142"/>
        <end position="146"/>
    </location>
</feature>
<feature type="repeat" description="24">
    <location>
        <begin position="147"/>
        <end position="151"/>
    </location>
</feature>
<feature type="repeat" description="25">
    <location>
        <begin position="152"/>
        <end position="156"/>
    </location>
</feature>
<feature type="repeat" description="26">
    <location>
        <begin position="157"/>
        <end position="161"/>
    </location>
</feature>
<feature type="repeat" description="27">
    <location>
        <begin position="162"/>
        <end position="166"/>
    </location>
</feature>
<feature type="repeat" description="28">
    <location>
        <begin position="167"/>
        <end position="171"/>
    </location>
</feature>
<feature type="repeat" description="29">
    <location>
        <begin position="172"/>
        <end position="176"/>
    </location>
</feature>
<feature type="repeat" description="30">
    <location>
        <begin position="177"/>
        <end position="181"/>
    </location>
</feature>
<feature type="repeat" description="31">
    <location>
        <begin position="182"/>
        <end position="186"/>
    </location>
</feature>
<feature type="repeat" description="32">
    <location>
        <begin position="187"/>
        <end position="191"/>
    </location>
</feature>
<feature type="repeat" description="33">
    <location>
        <begin position="192"/>
        <end position="196"/>
    </location>
</feature>
<feature type="repeat" description="34; approximate">
    <location>
        <begin position="197"/>
        <end position="201"/>
    </location>
</feature>
<feature type="region of interest" description="34 X 5 AA approximate tandem repeats of P-P-V-[EVY]-K">
    <location>
        <begin position="32"/>
        <end position="201"/>
    </location>
</feature>
<feature type="region of interest" description="Disordered" evidence="3">
    <location>
        <begin position="51"/>
        <end position="84"/>
    </location>
</feature>
<feature type="region of interest" description="Disordered" evidence="3">
    <location>
        <begin position="132"/>
        <end position="206"/>
    </location>
</feature>
<accession>Q43564</accession>